<dbReference type="EMBL" id="CR855704">
    <property type="protein sequence ID" value="CAL49363.1"/>
    <property type="molecule type" value="mRNA"/>
</dbReference>
<dbReference type="EMBL" id="BC089722">
    <property type="protein sequence ID" value="AAH89722.1"/>
    <property type="molecule type" value="mRNA"/>
</dbReference>
<dbReference type="EMBL" id="BC127352">
    <property type="protein sequence ID" value="AAI27353.1"/>
    <property type="molecule type" value="mRNA"/>
</dbReference>
<dbReference type="EMBL" id="BC157539">
    <property type="protein sequence ID" value="AAI57540.1"/>
    <property type="molecule type" value="mRNA"/>
</dbReference>
<dbReference type="RefSeq" id="NP_001015781.1">
    <molecule id="Q5EBE8-1"/>
    <property type="nucleotide sequence ID" value="NM_001015781.1"/>
</dbReference>
<dbReference type="SMR" id="Q5EBE8"/>
<dbReference type="FunCoup" id="Q5EBE8">
    <property type="interactions" value="1702"/>
</dbReference>
<dbReference type="STRING" id="8364.ENSXETP00000053636"/>
<dbReference type="PaxDb" id="8364-ENSXETP00000011458"/>
<dbReference type="DNASU" id="548498"/>
<dbReference type="GeneID" id="548498"/>
<dbReference type="KEGG" id="xtr:548498"/>
<dbReference type="AGR" id="Xenbase:XB-GENE-974377"/>
<dbReference type="CTD" id="8668"/>
<dbReference type="Xenbase" id="XB-GENE-974377">
    <property type="gene designation" value="eif3i"/>
</dbReference>
<dbReference type="eggNOG" id="KOG0643">
    <property type="taxonomic scope" value="Eukaryota"/>
</dbReference>
<dbReference type="HOGENOM" id="CLU_043845_0_0_1"/>
<dbReference type="InParanoid" id="Q5EBE8"/>
<dbReference type="OMA" id="VWFSHNG"/>
<dbReference type="OrthoDB" id="24966at2759"/>
<dbReference type="PhylomeDB" id="Q5EBE8"/>
<dbReference type="TreeFam" id="TF101515"/>
<dbReference type="Reactome" id="R-XTR-156827">
    <property type="pathway name" value="L13a-mediated translational silencing of Ceruloplasmin expression"/>
</dbReference>
<dbReference type="Reactome" id="R-XTR-72689">
    <property type="pathway name" value="Formation of a pool of free 40S subunits"/>
</dbReference>
<dbReference type="Reactome" id="R-XTR-72695">
    <property type="pathway name" value="Formation of the ternary complex, and subsequently, the 43S complex"/>
</dbReference>
<dbReference type="Reactome" id="R-XTR-72702">
    <property type="pathway name" value="Ribosomal scanning and start codon recognition"/>
</dbReference>
<dbReference type="Proteomes" id="UP000008143">
    <property type="component" value="Chromosome 2"/>
</dbReference>
<dbReference type="Bgee" id="ENSXETG00000005247">
    <property type="expression patterns" value="Expressed in heart and 12 other cell types or tissues"/>
</dbReference>
<dbReference type="GO" id="GO:0016282">
    <property type="term" value="C:eukaryotic 43S preinitiation complex"/>
    <property type="evidence" value="ECO:0007669"/>
    <property type="project" value="UniProtKB-UniRule"/>
</dbReference>
<dbReference type="GO" id="GO:0033290">
    <property type="term" value="C:eukaryotic 48S preinitiation complex"/>
    <property type="evidence" value="ECO:0007669"/>
    <property type="project" value="UniProtKB-UniRule"/>
</dbReference>
<dbReference type="GO" id="GO:0005852">
    <property type="term" value="C:eukaryotic translation initiation factor 3 complex"/>
    <property type="evidence" value="ECO:0000250"/>
    <property type="project" value="UniProtKB"/>
</dbReference>
<dbReference type="GO" id="GO:0003743">
    <property type="term" value="F:translation initiation factor activity"/>
    <property type="evidence" value="ECO:0000250"/>
    <property type="project" value="UniProtKB"/>
</dbReference>
<dbReference type="GO" id="GO:0001732">
    <property type="term" value="P:formation of cytoplasmic translation initiation complex"/>
    <property type="evidence" value="ECO:0007669"/>
    <property type="project" value="UniProtKB-UniRule"/>
</dbReference>
<dbReference type="GO" id="GO:0006413">
    <property type="term" value="P:translational initiation"/>
    <property type="evidence" value="ECO:0000250"/>
    <property type="project" value="UniProtKB"/>
</dbReference>
<dbReference type="FunFam" id="2.130.10.10:FF:000127">
    <property type="entry name" value="Eukaryotic translation initiation factor 3 subunit I"/>
    <property type="match status" value="1"/>
</dbReference>
<dbReference type="Gene3D" id="2.130.10.10">
    <property type="entry name" value="YVTN repeat-like/Quinoprotein amine dehydrogenase"/>
    <property type="match status" value="1"/>
</dbReference>
<dbReference type="HAMAP" id="MF_03008">
    <property type="entry name" value="eIF3i"/>
    <property type="match status" value="1"/>
</dbReference>
<dbReference type="InterPro" id="IPR027525">
    <property type="entry name" value="eIF3i"/>
</dbReference>
<dbReference type="InterPro" id="IPR015943">
    <property type="entry name" value="WD40/YVTN_repeat-like_dom_sf"/>
</dbReference>
<dbReference type="InterPro" id="IPR019775">
    <property type="entry name" value="WD40_repeat_CS"/>
</dbReference>
<dbReference type="InterPro" id="IPR036322">
    <property type="entry name" value="WD40_repeat_dom_sf"/>
</dbReference>
<dbReference type="InterPro" id="IPR001680">
    <property type="entry name" value="WD40_rpt"/>
</dbReference>
<dbReference type="PANTHER" id="PTHR19877">
    <property type="entry name" value="EUKARYOTIC TRANSLATION INITIATION FACTOR 3 SUBUNIT I"/>
    <property type="match status" value="1"/>
</dbReference>
<dbReference type="PANTHER" id="PTHR19877:SF1">
    <property type="entry name" value="EUKARYOTIC TRANSLATION INITIATION FACTOR 3 SUBUNIT I"/>
    <property type="match status" value="1"/>
</dbReference>
<dbReference type="Pfam" id="PF24805">
    <property type="entry name" value="EIF3I"/>
    <property type="match status" value="1"/>
</dbReference>
<dbReference type="SMART" id="SM00320">
    <property type="entry name" value="WD40"/>
    <property type="match status" value="5"/>
</dbReference>
<dbReference type="SUPFAM" id="SSF50978">
    <property type="entry name" value="WD40 repeat-like"/>
    <property type="match status" value="1"/>
</dbReference>
<dbReference type="PROSITE" id="PS00678">
    <property type="entry name" value="WD_REPEATS_1"/>
    <property type="match status" value="1"/>
</dbReference>
<dbReference type="PROSITE" id="PS50082">
    <property type="entry name" value="WD_REPEATS_2"/>
    <property type="match status" value="3"/>
</dbReference>
<dbReference type="PROSITE" id="PS50294">
    <property type="entry name" value="WD_REPEATS_REGION"/>
    <property type="match status" value="2"/>
</dbReference>
<keyword id="KW-0025">Alternative splicing</keyword>
<keyword id="KW-0963">Cytoplasm</keyword>
<keyword id="KW-0396">Initiation factor</keyword>
<keyword id="KW-0648">Protein biosynthesis</keyword>
<keyword id="KW-1185">Reference proteome</keyword>
<keyword id="KW-0677">Repeat</keyword>
<keyword id="KW-0853">WD repeat</keyword>
<reference key="1">
    <citation type="submission" date="2006-10" db="EMBL/GenBank/DDBJ databases">
        <authorList>
            <consortium name="Sanger Xenopus tropicalis EST/cDNA project"/>
        </authorList>
    </citation>
    <scope>NUCLEOTIDE SEQUENCE [LARGE SCALE MRNA] (ISOFORM 1)</scope>
    <source>
        <tissue>Gastrula</tissue>
    </source>
</reference>
<reference key="2">
    <citation type="submission" date="2007-12" db="EMBL/GenBank/DDBJ databases">
        <authorList>
            <consortium name="NIH - Xenopus Gene Collection (XGC) project"/>
        </authorList>
    </citation>
    <scope>NUCLEOTIDE SEQUENCE [LARGE SCALE MRNA] (ISOFORMS 1 AND 2)</scope>
    <source>
        <tissue>Fat body</tissue>
        <tissue>Thymus</tissue>
    </source>
</reference>
<sequence>MRPILLQGHERSITQIKYNRDGDLLFTVAKDPVVNVWYSVNGERLGTYSGHTGAVWCVDVDWDTRHVLSGSADNSCRLWDCETGKQLALLETNSAVRTCGFDFGGNIIMFSTDKQMGYQCFVSFIDLRDPTQIEDNEPYMKIPCSESKITSAVWGPLGENIIAGHENGELNQYSAKSGEIVNSIKEHSKQINDIQTSRDMTMFVTASKDCTSKLFDSTSLEHQKTFRTERPVNSAAISPIYDHVVLGGGQEAMDVTTTSTRIGKFEARFFHVAFEEEFGRVKGHFGPINSLAFHPDGKSYSSGGEDGYVRIHYFDPQYFDFEFES</sequence>
<evidence type="ECO:0000255" key="1">
    <source>
        <dbReference type="HAMAP-Rule" id="MF_03008"/>
    </source>
</evidence>
<evidence type="ECO:0000303" key="2">
    <source ref="2"/>
</evidence>
<comment type="function">
    <text evidence="1">Component of the eukaryotic translation initiation factor 3 (eIF-3) complex, which is involved in protein synthesis of a specialized repertoire of mRNAs and, together with other initiation factors, stimulates binding of mRNA and methionyl-tRNAi to the 40S ribosome. The eIF-3 complex specifically targets and initiates translation of a subset of mRNAs involved in cell proliferation.</text>
</comment>
<comment type="subunit">
    <text evidence="1">Component of the eukaryotic translation initiation factor 3 (eIF-3) complex, which is composed of 13 subunits: eif3a, eif3b, eif3c, eif3d, eif3e, eif3f, eif3g, eif3h, eif3i, eif3j, eif3k, eif3l and eif3m.</text>
</comment>
<comment type="subcellular location">
    <subcellularLocation>
        <location evidence="1">Cytoplasm</location>
    </subcellularLocation>
</comment>
<comment type="alternative products">
    <event type="alternative splicing"/>
    <isoform>
        <id>Q5EBE8-1</id>
        <name>1</name>
        <sequence type="displayed"/>
    </isoform>
    <isoform>
        <id>Q5EBE8-2</id>
        <name>2</name>
        <sequence type="described" ref="VSP_036501"/>
    </isoform>
</comment>
<comment type="similarity">
    <text evidence="1">Belongs to the eIF-3 subunit I family.</text>
</comment>
<gene>
    <name type="primary">eif3i</name>
    <name type="synonym">eif3s2</name>
    <name type="ORF">TGas097i03.1</name>
</gene>
<feature type="chain" id="PRO_0000365334" description="Eukaryotic translation initiation factor 3 subunit I">
    <location>
        <begin position="1"/>
        <end position="325"/>
    </location>
</feature>
<feature type="repeat" description="WD 1">
    <location>
        <begin position="8"/>
        <end position="47"/>
    </location>
</feature>
<feature type="repeat" description="WD 2">
    <location>
        <begin position="50"/>
        <end position="89"/>
    </location>
</feature>
<feature type="repeat" description="WD 3">
    <location>
        <begin position="144"/>
        <end position="183"/>
    </location>
</feature>
<feature type="repeat" description="WD 4">
    <location>
        <begin position="186"/>
        <end position="225"/>
    </location>
</feature>
<feature type="repeat" description="WD 5">
    <location>
        <begin position="283"/>
        <end position="324"/>
    </location>
</feature>
<feature type="splice variant" id="VSP_036501" description="In isoform 2." evidence="2">
    <original>PQYFDFEFES</original>
    <variation>THTHNCIDCSMISLQ</variation>
    <location>
        <begin position="316"/>
        <end position="325"/>
    </location>
</feature>
<accession>Q5EBE8</accession>
<accession>A1L0Z7</accession>
<proteinExistence type="evidence at transcript level"/>
<name>EIF3I_XENTR</name>
<protein>
    <recommendedName>
        <fullName evidence="1">Eukaryotic translation initiation factor 3 subunit I</fullName>
        <shortName evidence="1">eIF3i</shortName>
    </recommendedName>
    <alternativeName>
        <fullName evidence="1">Eukaryotic translation initiation factor 3 subunit 2</fullName>
    </alternativeName>
    <alternativeName>
        <fullName evidence="1">eIF-3-beta</fullName>
    </alternativeName>
    <alternativeName>
        <fullName evidence="1">eIF3 p36</fullName>
    </alternativeName>
</protein>
<organism>
    <name type="scientific">Xenopus tropicalis</name>
    <name type="common">Western clawed frog</name>
    <name type="synonym">Silurana tropicalis</name>
    <dbReference type="NCBI Taxonomy" id="8364"/>
    <lineage>
        <taxon>Eukaryota</taxon>
        <taxon>Metazoa</taxon>
        <taxon>Chordata</taxon>
        <taxon>Craniata</taxon>
        <taxon>Vertebrata</taxon>
        <taxon>Euteleostomi</taxon>
        <taxon>Amphibia</taxon>
        <taxon>Batrachia</taxon>
        <taxon>Anura</taxon>
        <taxon>Pipoidea</taxon>
        <taxon>Pipidae</taxon>
        <taxon>Xenopodinae</taxon>
        <taxon>Xenopus</taxon>
        <taxon>Silurana</taxon>
    </lineage>
</organism>